<comment type="subunit">
    <text evidence="1 3 4 5">Interacts with NEDD4 (By similarity). Binds to the WW domain of YAP1, WWP1 and WWP2. Interacts with WWOX.</text>
</comment>
<comment type="interaction">
    <interactant intactId="EBI-3867685">
        <id>Q96G27</id>
    </interactant>
    <interactant intactId="EBI-12135243">
        <id>O95208-2</id>
        <label>EPN2</label>
    </interactant>
    <organismsDiffer>false</organismsDiffer>
    <experiments>3</experiments>
</comment>
<comment type="interaction">
    <interactant intactId="EBI-3867685">
        <id>Q96G27</id>
    </interactant>
    <interactant intactId="EBI-8640191">
        <id>Q9NRQ5</id>
        <label>SMCO4</label>
    </interactant>
    <organismsDiffer>false</organismsDiffer>
    <experiments>3</experiments>
</comment>
<comment type="interaction">
    <interactant intactId="EBI-3867685">
        <id>Q96G27</id>
    </interactant>
    <interactant intactId="EBI-4320739">
        <id>Q9NZC7</id>
        <label>WWOX</label>
    </interactant>
    <organismsDiffer>false</organismsDiffer>
    <experiments>4</experiments>
</comment>
<comment type="interaction">
    <interactant intactId="EBI-3867685">
        <id>Q96G27</id>
    </interactant>
    <interactant intactId="EBI-1044059">
        <id>P46937</id>
        <label>YAP1</label>
    </interactant>
    <organismsDiffer>false</organismsDiffer>
    <experiments>4</experiments>
</comment>
<comment type="interaction">
    <interactant intactId="EBI-3867685">
        <id>Q96G27</id>
    </interactant>
    <interactant intactId="EBI-747061">
        <id>O75800</id>
        <label>ZMYND10</label>
    </interactant>
    <organismsDiffer>false</organismsDiffer>
    <experiments>3</experiments>
</comment>
<comment type="tissue specificity">
    <text>Expressed in most tissues but at significantly lower levels in placenta, lung, liver, and kidney.</text>
</comment>
<comment type="domain">
    <text evidence="1">The PPxY motif 2 mediates interaction with WWOX. Both PPxY motifs mediate interaction with NEDD4 (By similarity).</text>
</comment>
<comment type="sequence caution" evidence="6">
    <conflict type="erroneous initiation">
        <sequence resource="EMBL-CDS" id="AAD10950"/>
    </conflict>
</comment>
<proteinExistence type="evidence at protein level"/>
<evidence type="ECO:0000250" key="1"/>
<evidence type="ECO:0000256" key="2">
    <source>
        <dbReference type="SAM" id="MobiDB-lite"/>
    </source>
</evidence>
<evidence type="ECO:0000269" key="3">
    <source>
    </source>
</evidence>
<evidence type="ECO:0000269" key="4">
    <source>
    </source>
</evidence>
<evidence type="ECO:0000269" key="5">
    <source>
    </source>
</evidence>
<evidence type="ECO:0000305" key="6"/>
<accession>Q96G27</accession>
<accession>B2RE02</accession>
<accession>O95637</accession>
<feature type="chain" id="PRO_0000065948" description="WW domain-binding protein 1">
    <location>
        <begin position="1"/>
        <end position="269"/>
    </location>
</feature>
<feature type="region of interest" description="Disordered" evidence="2">
    <location>
        <begin position="169"/>
        <end position="203"/>
    </location>
</feature>
<feature type="region of interest" description="Disordered" evidence="2">
    <location>
        <begin position="249"/>
        <end position="269"/>
    </location>
</feature>
<feature type="short sequence motif" description="PPxY motif 1">
    <location>
        <begin position="124"/>
        <end position="127"/>
    </location>
</feature>
<feature type="short sequence motif" description="PPxY motif 2">
    <location>
        <begin position="137"/>
        <end position="141"/>
    </location>
</feature>
<feature type="compositionally biased region" description="Polar residues" evidence="2">
    <location>
        <begin position="174"/>
        <end position="183"/>
    </location>
</feature>
<feature type="mutagenesis site" description="Abolishes interaction with WWOX." evidence="3">
    <original>Y</original>
    <variation>A</variation>
    <location>
        <position position="141"/>
    </location>
</feature>
<reference key="1">
    <citation type="journal article" date="1997" name="J. Biol. Chem.">
        <title>Characterization of the WW domain of human Yes-associated protein and its polyproline containing ligands.</title>
        <authorList>
            <person name="Chen H.I."/>
            <person name="Einbond A."/>
            <person name="Kwak S.-J."/>
            <person name="Linn H."/>
            <person name="Koepf E."/>
            <person name="Peterson S."/>
            <person name="Kelly J.W."/>
            <person name="Sudol M."/>
        </authorList>
    </citation>
    <scope>NUCLEOTIDE SEQUENCE [MRNA]</scope>
    <scope>INTERACTION WITH YAP1</scope>
    <source>
        <tissue>Lung</tissue>
    </source>
</reference>
<reference key="2">
    <citation type="journal article" date="2004" name="Nat. Genet.">
        <title>Complete sequencing and characterization of 21,243 full-length human cDNAs.</title>
        <authorList>
            <person name="Ota T."/>
            <person name="Suzuki Y."/>
            <person name="Nishikawa T."/>
            <person name="Otsuki T."/>
            <person name="Sugiyama T."/>
            <person name="Irie R."/>
            <person name="Wakamatsu A."/>
            <person name="Hayashi K."/>
            <person name="Sato H."/>
            <person name="Nagai K."/>
            <person name="Kimura K."/>
            <person name="Makita H."/>
            <person name="Sekine M."/>
            <person name="Obayashi M."/>
            <person name="Nishi T."/>
            <person name="Shibahara T."/>
            <person name="Tanaka T."/>
            <person name="Ishii S."/>
            <person name="Yamamoto J."/>
            <person name="Saito K."/>
            <person name="Kawai Y."/>
            <person name="Isono Y."/>
            <person name="Nakamura Y."/>
            <person name="Nagahari K."/>
            <person name="Murakami K."/>
            <person name="Yasuda T."/>
            <person name="Iwayanagi T."/>
            <person name="Wagatsuma M."/>
            <person name="Shiratori A."/>
            <person name="Sudo H."/>
            <person name="Hosoiri T."/>
            <person name="Kaku Y."/>
            <person name="Kodaira H."/>
            <person name="Kondo H."/>
            <person name="Sugawara M."/>
            <person name="Takahashi M."/>
            <person name="Kanda K."/>
            <person name="Yokoi T."/>
            <person name="Furuya T."/>
            <person name="Kikkawa E."/>
            <person name="Omura Y."/>
            <person name="Abe K."/>
            <person name="Kamihara K."/>
            <person name="Katsuta N."/>
            <person name="Sato K."/>
            <person name="Tanikawa M."/>
            <person name="Yamazaki M."/>
            <person name="Ninomiya K."/>
            <person name="Ishibashi T."/>
            <person name="Yamashita H."/>
            <person name="Murakawa K."/>
            <person name="Fujimori K."/>
            <person name="Tanai H."/>
            <person name="Kimata M."/>
            <person name="Watanabe M."/>
            <person name="Hiraoka S."/>
            <person name="Chiba Y."/>
            <person name="Ishida S."/>
            <person name="Ono Y."/>
            <person name="Takiguchi S."/>
            <person name="Watanabe S."/>
            <person name="Yosida M."/>
            <person name="Hotuta T."/>
            <person name="Kusano J."/>
            <person name="Kanehori K."/>
            <person name="Takahashi-Fujii A."/>
            <person name="Hara H."/>
            <person name="Tanase T.-O."/>
            <person name="Nomura Y."/>
            <person name="Togiya S."/>
            <person name="Komai F."/>
            <person name="Hara R."/>
            <person name="Takeuchi K."/>
            <person name="Arita M."/>
            <person name="Imose N."/>
            <person name="Musashino K."/>
            <person name="Yuuki H."/>
            <person name="Oshima A."/>
            <person name="Sasaki N."/>
            <person name="Aotsuka S."/>
            <person name="Yoshikawa Y."/>
            <person name="Matsunawa H."/>
            <person name="Ichihara T."/>
            <person name="Shiohata N."/>
            <person name="Sano S."/>
            <person name="Moriya S."/>
            <person name="Momiyama H."/>
            <person name="Satoh N."/>
            <person name="Takami S."/>
            <person name="Terashima Y."/>
            <person name="Suzuki O."/>
            <person name="Nakagawa S."/>
            <person name="Senoh A."/>
            <person name="Mizoguchi H."/>
            <person name="Goto Y."/>
            <person name="Shimizu F."/>
            <person name="Wakebe H."/>
            <person name="Hishigaki H."/>
            <person name="Watanabe T."/>
            <person name="Sugiyama A."/>
            <person name="Takemoto M."/>
            <person name="Kawakami B."/>
            <person name="Yamazaki M."/>
            <person name="Watanabe K."/>
            <person name="Kumagai A."/>
            <person name="Itakura S."/>
            <person name="Fukuzumi Y."/>
            <person name="Fujimori Y."/>
            <person name="Komiyama M."/>
            <person name="Tashiro H."/>
            <person name="Tanigami A."/>
            <person name="Fujiwara T."/>
            <person name="Ono T."/>
            <person name="Yamada K."/>
            <person name="Fujii Y."/>
            <person name="Ozaki K."/>
            <person name="Hirao M."/>
            <person name="Ohmori Y."/>
            <person name="Kawabata A."/>
            <person name="Hikiji T."/>
            <person name="Kobatake N."/>
            <person name="Inagaki H."/>
            <person name="Ikema Y."/>
            <person name="Okamoto S."/>
            <person name="Okitani R."/>
            <person name="Kawakami T."/>
            <person name="Noguchi S."/>
            <person name="Itoh T."/>
            <person name="Shigeta K."/>
            <person name="Senba T."/>
            <person name="Matsumura K."/>
            <person name="Nakajima Y."/>
            <person name="Mizuno T."/>
            <person name="Morinaga M."/>
            <person name="Sasaki M."/>
            <person name="Togashi T."/>
            <person name="Oyama M."/>
            <person name="Hata H."/>
            <person name="Watanabe M."/>
            <person name="Komatsu T."/>
            <person name="Mizushima-Sugano J."/>
            <person name="Satoh T."/>
            <person name="Shirai Y."/>
            <person name="Takahashi Y."/>
            <person name="Nakagawa K."/>
            <person name="Okumura K."/>
            <person name="Nagase T."/>
            <person name="Nomura N."/>
            <person name="Kikuchi H."/>
            <person name="Masuho Y."/>
            <person name="Yamashita R."/>
            <person name="Nakai K."/>
            <person name="Yada T."/>
            <person name="Nakamura Y."/>
            <person name="Ohara O."/>
            <person name="Isogai T."/>
            <person name="Sugano S."/>
        </authorList>
    </citation>
    <scope>NUCLEOTIDE SEQUENCE [LARGE SCALE MRNA]</scope>
</reference>
<reference key="3">
    <citation type="submission" date="2005-09" db="EMBL/GenBank/DDBJ databases">
        <authorList>
            <person name="Mural R.J."/>
            <person name="Istrail S."/>
            <person name="Sutton G.G."/>
            <person name="Florea L."/>
            <person name="Halpern A.L."/>
            <person name="Mobarry C.M."/>
            <person name="Lippert R."/>
            <person name="Walenz B."/>
            <person name="Shatkay H."/>
            <person name="Dew I."/>
            <person name="Miller J.R."/>
            <person name="Flanigan M.J."/>
            <person name="Edwards N.J."/>
            <person name="Bolanos R."/>
            <person name="Fasulo D."/>
            <person name="Halldorsson B.V."/>
            <person name="Hannenhalli S."/>
            <person name="Turner R."/>
            <person name="Yooseph S."/>
            <person name="Lu F."/>
            <person name="Nusskern D.R."/>
            <person name="Shue B.C."/>
            <person name="Zheng X.H."/>
            <person name="Zhong F."/>
            <person name="Delcher A.L."/>
            <person name="Huson D.H."/>
            <person name="Kravitz S.A."/>
            <person name="Mouchard L."/>
            <person name="Reinert K."/>
            <person name="Remington K.A."/>
            <person name="Clark A.G."/>
            <person name="Waterman M.S."/>
            <person name="Eichler E.E."/>
            <person name="Adams M.D."/>
            <person name="Hunkapiller M.W."/>
            <person name="Myers E.W."/>
            <person name="Venter J.C."/>
        </authorList>
    </citation>
    <scope>NUCLEOTIDE SEQUENCE [LARGE SCALE GENOMIC DNA]</scope>
</reference>
<reference key="4">
    <citation type="journal article" date="2004" name="Genome Res.">
        <title>The status, quality, and expansion of the NIH full-length cDNA project: the Mammalian Gene Collection (MGC).</title>
        <authorList>
            <consortium name="The MGC Project Team"/>
        </authorList>
    </citation>
    <scope>NUCLEOTIDE SEQUENCE [LARGE SCALE MRNA]</scope>
    <source>
        <tissue>B-cell</tissue>
        <tissue>Eye</tissue>
        <tissue>Lung</tissue>
        <tissue>Pancreas</tissue>
    </source>
</reference>
<reference key="5">
    <citation type="journal article" date="1997" name="J. Biol. Chem.">
        <title>Identification of novel human WW domain-containing proteins by cloning of ligand targets.</title>
        <authorList>
            <person name="Pirozzi G."/>
            <person name="McConnell S.J."/>
            <person name="Uveges A.J."/>
            <person name="Carter J.M."/>
            <person name="Sparks A.B."/>
            <person name="Kay B.K."/>
            <person name="Fowlkes D.M."/>
        </authorList>
    </citation>
    <scope>INTERACTION WITH WWP1 AND WWP2</scope>
</reference>
<reference key="6">
    <citation type="journal article" date="2004" name="Oncogene">
        <title>WWOX binds the specific proline-rich ligand PPXY: identification of candidate interacting proteins.</title>
        <authorList>
            <person name="Ludes-Meyers J.H."/>
            <person name="Kil H."/>
            <person name="Bednarek A.K."/>
            <person name="Drake J."/>
            <person name="Bedford M.T."/>
            <person name="Aldaz C.M."/>
        </authorList>
    </citation>
    <scope>INTERACTION WITH WWOX</scope>
    <scope>DOMAINS</scope>
    <scope>MUTAGENESIS OF TYR-141</scope>
</reference>
<name>WBP1_HUMAN</name>
<gene>
    <name type="primary">WBP1</name>
</gene>
<dbReference type="EMBL" id="U79457">
    <property type="protein sequence ID" value="AAD10950.1"/>
    <property type="status" value="ALT_INIT"/>
    <property type="molecule type" value="mRNA"/>
</dbReference>
<dbReference type="EMBL" id="AK315745">
    <property type="protein sequence ID" value="BAG38099.1"/>
    <property type="molecule type" value="mRNA"/>
</dbReference>
<dbReference type="EMBL" id="CH471053">
    <property type="protein sequence ID" value="EAW99656.1"/>
    <property type="molecule type" value="Genomic_DNA"/>
</dbReference>
<dbReference type="EMBL" id="BC010012">
    <property type="protein sequence ID" value="AAH10012.1"/>
    <property type="molecule type" value="mRNA"/>
</dbReference>
<dbReference type="EMBL" id="BC064482">
    <property type="protein sequence ID" value="AAH64482.1"/>
    <property type="molecule type" value="mRNA"/>
</dbReference>
<dbReference type="EMBL" id="BC071626">
    <property type="protein sequence ID" value="AAH71626.1"/>
    <property type="molecule type" value="mRNA"/>
</dbReference>
<dbReference type="EMBL" id="BC071850">
    <property type="protein sequence ID" value="AAH71850.1"/>
    <property type="molecule type" value="mRNA"/>
</dbReference>
<dbReference type="CCDS" id="CCDS1943.1"/>
<dbReference type="RefSeq" id="NP_036609.1">
    <property type="nucleotide sequence ID" value="NM_012477.4"/>
</dbReference>
<dbReference type="PDB" id="1JMQ">
    <property type="method" value="NMR"/>
    <property type="chains" value="P=135-144"/>
</dbReference>
<dbReference type="PDB" id="1K5R">
    <property type="method" value="NMR"/>
    <property type="chains" value="B=135-143"/>
</dbReference>
<dbReference type="PDBsum" id="1JMQ"/>
<dbReference type="PDBsum" id="1K5R"/>
<dbReference type="SMR" id="Q96G27"/>
<dbReference type="BioGRID" id="117103">
    <property type="interactions" value="41"/>
</dbReference>
<dbReference type="FunCoup" id="Q96G27">
    <property type="interactions" value="34"/>
</dbReference>
<dbReference type="IntAct" id="Q96G27">
    <property type="interactions" value="30"/>
</dbReference>
<dbReference type="MINT" id="Q96G27"/>
<dbReference type="STRING" id="9606.ENSP00000233615"/>
<dbReference type="GlyGen" id="Q96G27">
    <property type="glycosylation" value="2 sites"/>
</dbReference>
<dbReference type="iPTMnet" id="Q96G27"/>
<dbReference type="PhosphoSitePlus" id="Q96G27"/>
<dbReference type="BioMuta" id="WBP1"/>
<dbReference type="DMDM" id="25091540"/>
<dbReference type="jPOST" id="Q96G27"/>
<dbReference type="MassIVE" id="Q96G27"/>
<dbReference type="PaxDb" id="9606-ENSP00000233615"/>
<dbReference type="PeptideAtlas" id="Q96G27"/>
<dbReference type="ProteomicsDB" id="76588"/>
<dbReference type="Antibodypedia" id="34809">
    <property type="antibodies" value="72 antibodies from 26 providers"/>
</dbReference>
<dbReference type="DNASU" id="23559"/>
<dbReference type="Ensembl" id="ENST00000233615.7">
    <property type="protein sequence ID" value="ENSP00000233615.2"/>
    <property type="gene ID" value="ENSG00000239779.7"/>
</dbReference>
<dbReference type="GeneID" id="23559"/>
<dbReference type="KEGG" id="hsa:23559"/>
<dbReference type="MANE-Select" id="ENST00000233615.7">
    <property type="protein sequence ID" value="ENSP00000233615.2"/>
    <property type="RefSeq nucleotide sequence ID" value="NM_012477.4"/>
    <property type="RefSeq protein sequence ID" value="NP_036609.1"/>
</dbReference>
<dbReference type="UCSC" id="uc002slj.3">
    <property type="organism name" value="human"/>
</dbReference>
<dbReference type="AGR" id="HGNC:12737"/>
<dbReference type="CTD" id="23559"/>
<dbReference type="GeneCards" id="WBP1"/>
<dbReference type="HGNC" id="HGNC:12737">
    <property type="gene designation" value="WBP1"/>
</dbReference>
<dbReference type="HPA" id="ENSG00000239779">
    <property type="expression patterns" value="Low tissue specificity"/>
</dbReference>
<dbReference type="MIM" id="606961">
    <property type="type" value="gene"/>
</dbReference>
<dbReference type="neXtProt" id="NX_Q96G27"/>
<dbReference type="OpenTargets" id="ENSG00000239779"/>
<dbReference type="PharmGKB" id="PA37348"/>
<dbReference type="VEuPathDB" id="HostDB:ENSG00000239779"/>
<dbReference type="eggNOG" id="ENOG502RYC0">
    <property type="taxonomic scope" value="Eukaryota"/>
</dbReference>
<dbReference type="GeneTree" id="ENSGT00950000183109"/>
<dbReference type="InParanoid" id="Q96G27"/>
<dbReference type="OMA" id="NGSHETW"/>
<dbReference type="OrthoDB" id="9907279at2759"/>
<dbReference type="PAN-GO" id="Q96G27">
    <property type="GO annotations" value="1 GO annotation based on evolutionary models"/>
</dbReference>
<dbReference type="PhylomeDB" id="Q96G27"/>
<dbReference type="TreeFam" id="TF330726"/>
<dbReference type="PathwayCommons" id="Q96G27"/>
<dbReference type="SignaLink" id="Q96G27"/>
<dbReference type="BioGRID-ORCS" id="23559">
    <property type="hits" value="288 hits in 1154 CRISPR screens"/>
</dbReference>
<dbReference type="ChiTaRS" id="WBP1">
    <property type="organism name" value="human"/>
</dbReference>
<dbReference type="EvolutionaryTrace" id="Q96G27"/>
<dbReference type="GeneWiki" id="WBP1"/>
<dbReference type="GenomeRNAi" id="23559"/>
<dbReference type="Pharos" id="Q96G27">
    <property type="development level" value="Tbio"/>
</dbReference>
<dbReference type="PRO" id="PR:Q96G27"/>
<dbReference type="Proteomes" id="UP000005640">
    <property type="component" value="Chromosome 2"/>
</dbReference>
<dbReference type="RNAct" id="Q96G27">
    <property type="molecule type" value="protein"/>
</dbReference>
<dbReference type="Bgee" id="ENSG00000239779">
    <property type="expression patterns" value="Expressed in right uterine tube and 95 other cell types or tissues"/>
</dbReference>
<dbReference type="ExpressionAtlas" id="Q96G27">
    <property type="expression patterns" value="baseline and differential"/>
</dbReference>
<dbReference type="GO" id="GO:0050699">
    <property type="term" value="F:WW domain binding"/>
    <property type="evidence" value="ECO:0000353"/>
    <property type="project" value="UniProtKB"/>
</dbReference>
<dbReference type="InterPro" id="IPR021684">
    <property type="entry name" value="WBP1-like"/>
</dbReference>
<dbReference type="InterPro" id="IPR051994">
    <property type="entry name" value="WW_domain-binding"/>
</dbReference>
<dbReference type="PANTHER" id="PTHR16209">
    <property type="entry name" value="VESICULAR, OVEREXPRESSED IN CANCER, PROSURVIVAL PROTEIN 1"/>
    <property type="match status" value="1"/>
</dbReference>
<dbReference type="PANTHER" id="PTHR16209:SF5">
    <property type="entry name" value="WW DOMAIN-BINDING PROTEIN 1"/>
    <property type="match status" value="1"/>
</dbReference>
<dbReference type="Pfam" id="PF11669">
    <property type="entry name" value="WBP-1"/>
    <property type="match status" value="1"/>
</dbReference>
<organism>
    <name type="scientific">Homo sapiens</name>
    <name type="common">Human</name>
    <dbReference type="NCBI Taxonomy" id="9606"/>
    <lineage>
        <taxon>Eukaryota</taxon>
        <taxon>Metazoa</taxon>
        <taxon>Chordata</taxon>
        <taxon>Craniata</taxon>
        <taxon>Vertebrata</taxon>
        <taxon>Euteleostomi</taxon>
        <taxon>Mammalia</taxon>
        <taxon>Eutheria</taxon>
        <taxon>Euarchontoglires</taxon>
        <taxon>Primates</taxon>
        <taxon>Haplorrhini</taxon>
        <taxon>Catarrhini</taxon>
        <taxon>Hominidae</taxon>
        <taxon>Homo</taxon>
    </lineage>
</organism>
<sequence length="269" mass="29140">MARASSGNGSEEAWGALRAPQQQLRELCPGVNNQPYLCESGHCCGETGCCTYYYELWWFWLLWTVLILFSCCCAFRHRRAKLRLQQQQRQREINLLAYHGACHGAGPFPTGSLLDLRFLSTFKPPAYEDVVHRPGTPPPPYTVAPGRPLTASSEQTCCSSSSSCPAHFEGTNVEGVSSHQSAPPHQEGEPGAGVTPASTPPSCRYRRLTGDSGIELCPCPASGEGEPVKEVRVSATLPDLEDYSPCALPPESVPQIFPMGLSSSEGDIP</sequence>
<keyword id="KW-0002">3D-structure</keyword>
<keyword id="KW-1267">Proteomics identification</keyword>
<keyword id="KW-1185">Reference proteome</keyword>
<keyword id="KW-0677">Repeat</keyword>
<protein>
    <recommendedName>
        <fullName>WW domain-binding protein 1</fullName>
        <shortName>WBP-1</shortName>
    </recommendedName>
</protein>